<gene>
    <name evidence="1" type="primary">lnt</name>
    <name type="ordered locus">RB5177</name>
</gene>
<evidence type="ECO:0000255" key="1">
    <source>
        <dbReference type="HAMAP-Rule" id="MF_01148"/>
    </source>
</evidence>
<proteinExistence type="inferred from homology"/>
<comment type="function">
    <text evidence="1">Catalyzes the phospholipid dependent N-acylation of the N-terminal cysteine of apolipoprotein, the last step in lipoprotein maturation.</text>
</comment>
<comment type="catalytic activity">
    <reaction evidence="1">
        <text>N-terminal S-1,2-diacyl-sn-glyceryl-L-cysteinyl-[lipoprotein] + a glycerophospholipid = N-acyl-S-1,2-diacyl-sn-glyceryl-L-cysteinyl-[lipoprotein] + a 2-acyl-sn-glycero-3-phospholipid + H(+)</text>
        <dbReference type="Rhea" id="RHEA:48228"/>
        <dbReference type="Rhea" id="RHEA-COMP:14681"/>
        <dbReference type="Rhea" id="RHEA-COMP:14684"/>
        <dbReference type="ChEBI" id="CHEBI:15378"/>
        <dbReference type="ChEBI" id="CHEBI:136912"/>
        <dbReference type="ChEBI" id="CHEBI:140656"/>
        <dbReference type="ChEBI" id="CHEBI:140657"/>
        <dbReference type="ChEBI" id="CHEBI:140660"/>
        <dbReference type="EC" id="2.3.1.269"/>
    </reaction>
</comment>
<comment type="pathway">
    <text evidence="1">Protein modification; lipoprotein biosynthesis (N-acyl transfer).</text>
</comment>
<comment type="subcellular location">
    <subcellularLocation>
        <location evidence="1">Cell inner membrane</location>
        <topology evidence="1">Multi-pass membrane protein</topology>
    </subcellularLocation>
</comment>
<comment type="similarity">
    <text evidence="1">Belongs to the CN hydrolase family. Apolipoprotein N-acyltransferase subfamily.</text>
</comment>
<feature type="chain" id="PRO_0000178091" description="Apolipoprotein N-acyltransferase">
    <location>
        <begin position="1"/>
        <end position="571"/>
    </location>
</feature>
<feature type="transmembrane region" description="Helical" evidence="1">
    <location>
        <begin position="13"/>
        <end position="33"/>
    </location>
</feature>
<feature type="transmembrane region" description="Helical" evidence="1">
    <location>
        <begin position="51"/>
        <end position="68"/>
    </location>
</feature>
<feature type="transmembrane region" description="Helical" evidence="1">
    <location>
        <begin position="72"/>
        <end position="92"/>
    </location>
</feature>
<feature type="transmembrane region" description="Helical" evidence="1">
    <location>
        <begin position="118"/>
        <end position="138"/>
    </location>
</feature>
<feature type="transmembrane region" description="Helical" evidence="1">
    <location>
        <begin position="152"/>
        <end position="172"/>
    </location>
</feature>
<feature type="transmembrane region" description="Helical" evidence="1">
    <location>
        <begin position="199"/>
        <end position="219"/>
    </location>
</feature>
<feature type="transmembrane region" description="Helical" evidence="1">
    <location>
        <begin position="542"/>
        <end position="562"/>
    </location>
</feature>
<feature type="domain" description="CN hydrolase" evidence="1">
    <location>
        <begin position="234"/>
        <end position="527"/>
    </location>
</feature>
<feature type="active site" description="Proton acceptor" evidence="1">
    <location>
        <position position="275"/>
    </location>
</feature>
<feature type="active site" evidence="1">
    <location>
        <position position="380"/>
    </location>
</feature>
<feature type="active site" description="Nucleophile" evidence="1">
    <location>
        <position position="430"/>
    </location>
</feature>
<sequence length="571" mass="62647">MRWLSAASSAFAVVLWLSGPPFAIGPLVFIALVPLLAIAEVSPSSSWKRPLYAASLAYWLLSLQGLRYAHPLMFLPWIALSGYLAIYPVLFIALLRRLRLVDNCDVSQARRDRVPLCLVAAVVWVGLEWIRNYFFTGISVLMLGHALADMPMLIQIADLGGTYAVSFVIVCVNVAMFDALNRWVVQRTSSVSDSPMKSLVTAGGLLIATMVYGAMSMNAETEPTGKTIALLGDNELTVYEQDIVREQEIFATYGQMAIDAVAKSNTRIDAVVWPESMFSGGLPWMTTGADLVVPDFMQNPAAAPLQPEQLRFAVESKQNDFLDRANSIQRAMRASSTVPTEAPPAIIGGCGLVQYADRPSQYSGVVWVNATGNMSGTYSKNHLVLFGETIPLVHSLPWIRDIVPPGLGLDRGTQPERFDLDGISLMPNLCIETAVERIPVNHMHQLNSRANPKLPDAIVTLTNDVWFHDSAVVDHHLRCAQLVAVGCRRPILSAANGGPTVWIDSAGRVVERLAKGQSDVIYAQPRRDSRISLYVRIGSWPAGLMGAATLCGLAWMTFEWLMRRRKRSVIA</sequence>
<reference key="1">
    <citation type="journal article" date="2003" name="Proc. Natl. Acad. Sci. U.S.A.">
        <title>Complete genome sequence of the marine planctomycete Pirellula sp. strain 1.</title>
        <authorList>
            <person name="Gloeckner F.O."/>
            <person name="Kube M."/>
            <person name="Bauer M."/>
            <person name="Teeling H."/>
            <person name="Lombardot T."/>
            <person name="Ludwig W."/>
            <person name="Gade D."/>
            <person name="Beck A."/>
            <person name="Borzym K."/>
            <person name="Heitmann K."/>
            <person name="Rabus R."/>
            <person name="Schlesner H."/>
            <person name="Amann R."/>
            <person name="Reinhardt R."/>
        </authorList>
    </citation>
    <scope>NUCLEOTIDE SEQUENCE [LARGE SCALE GENOMIC DNA]</scope>
    <source>
        <strain>DSM 10527 / NCIMB 13988 / SH1</strain>
    </source>
</reference>
<organism>
    <name type="scientific">Rhodopirellula baltica (strain DSM 10527 / NCIMB 13988 / SH1)</name>
    <dbReference type="NCBI Taxonomy" id="243090"/>
    <lineage>
        <taxon>Bacteria</taxon>
        <taxon>Pseudomonadati</taxon>
        <taxon>Planctomycetota</taxon>
        <taxon>Planctomycetia</taxon>
        <taxon>Pirellulales</taxon>
        <taxon>Pirellulaceae</taxon>
        <taxon>Rhodopirellula</taxon>
    </lineage>
</organism>
<name>LNT_RHOBA</name>
<keyword id="KW-0012">Acyltransferase</keyword>
<keyword id="KW-0997">Cell inner membrane</keyword>
<keyword id="KW-1003">Cell membrane</keyword>
<keyword id="KW-0472">Membrane</keyword>
<keyword id="KW-1185">Reference proteome</keyword>
<keyword id="KW-0808">Transferase</keyword>
<keyword id="KW-0812">Transmembrane</keyword>
<keyword id="KW-1133">Transmembrane helix</keyword>
<dbReference type="EC" id="2.3.1.269" evidence="1"/>
<dbReference type="EMBL" id="BX294141">
    <property type="protein sequence ID" value="CAD78331.1"/>
    <property type="molecule type" value="Genomic_DNA"/>
</dbReference>
<dbReference type="RefSeq" id="NP_866550.1">
    <property type="nucleotide sequence ID" value="NC_005027.1"/>
</dbReference>
<dbReference type="SMR" id="Q7UGJ8"/>
<dbReference type="FunCoup" id="Q7UGJ8">
    <property type="interactions" value="238"/>
</dbReference>
<dbReference type="STRING" id="243090.RB5177"/>
<dbReference type="EnsemblBacteria" id="CAD78331">
    <property type="protein sequence ID" value="CAD78331"/>
    <property type="gene ID" value="RB5177"/>
</dbReference>
<dbReference type="KEGG" id="rba:RB5177"/>
<dbReference type="PATRIC" id="fig|243090.15.peg.2478"/>
<dbReference type="eggNOG" id="COG0815">
    <property type="taxonomic scope" value="Bacteria"/>
</dbReference>
<dbReference type="HOGENOM" id="CLU_019563_3_0_0"/>
<dbReference type="InParanoid" id="Q7UGJ8"/>
<dbReference type="OrthoDB" id="9804277at2"/>
<dbReference type="UniPathway" id="UPA00666"/>
<dbReference type="Proteomes" id="UP000001025">
    <property type="component" value="Chromosome"/>
</dbReference>
<dbReference type="GO" id="GO:0005886">
    <property type="term" value="C:plasma membrane"/>
    <property type="evidence" value="ECO:0007669"/>
    <property type="project" value="UniProtKB-SubCell"/>
</dbReference>
<dbReference type="GO" id="GO:0016410">
    <property type="term" value="F:N-acyltransferase activity"/>
    <property type="evidence" value="ECO:0007669"/>
    <property type="project" value="UniProtKB-UniRule"/>
</dbReference>
<dbReference type="GO" id="GO:0042158">
    <property type="term" value="P:lipoprotein biosynthetic process"/>
    <property type="evidence" value="ECO:0007669"/>
    <property type="project" value="UniProtKB-UniRule"/>
</dbReference>
<dbReference type="Gene3D" id="3.60.110.10">
    <property type="entry name" value="Carbon-nitrogen hydrolase"/>
    <property type="match status" value="1"/>
</dbReference>
<dbReference type="HAMAP" id="MF_01148">
    <property type="entry name" value="Lnt"/>
    <property type="match status" value="1"/>
</dbReference>
<dbReference type="InterPro" id="IPR004563">
    <property type="entry name" value="Apolipo_AcylTrfase"/>
</dbReference>
<dbReference type="InterPro" id="IPR003010">
    <property type="entry name" value="C-N_Hydrolase"/>
</dbReference>
<dbReference type="InterPro" id="IPR036526">
    <property type="entry name" value="C-N_Hydrolase_sf"/>
</dbReference>
<dbReference type="InterPro" id="IPR045378">
    <property type="entry name" value="LNT_N"/>
</dbReference>
<dbReference type="NCBIfam" id="TIGR00546">
    <property type="entry name" value="lnt"/>
    <property type="match status" value="1"/>
</dbReference>
<dbReference type="PANTHER" id="PTHR38686">
    <property type="entry name" value="APOLIPOPROTEIN N-ACYLTRANSFERASE"/>
    <property type="match status" value="1"/>
</dbReference>
<dbReference type="PANTHER" id="PTHR38686:SF1">
    <property type="entry name" value="APOLIPOPROTEIN N-ACYLTRANSFERASE"/>
    <property type="match status" value="1"/>
</dbReference>
<dbReference type="Pfam" id="PF00795">
    <property type="entry name" value="CN_hydrolase"/>
    <property type="match status" value="1"/>
</dbReference>
<dbReference type="Pfam" id="PF20154">
    <property type="entry name" value="LNT_N"/>
    <property type="match status" value="1"/>
</dbReference>
<dbReference type="SUPFAM" id="SSF56317">
    <property type="entry name" value="Carbon-nitrogen hydrolase"/>
    <property type="match status" value="1"/>
</dbReference>
<dbReference type="PROSITE" id="PS50263">
    <property type="entry name" value="CN_HYDROLASE"/>
    <property type="match status" value="1"/>
</dbReference>
<accession>Q7UGJ8</accession>
<protein>
    <recommendedName>
        <fullName evidence="1">Apolipoprotein N-acyltransferase</fullName>
        <shortName evidence="1">ALP N-acyltransferase</shortName>
        <ecNumber evidence="1">2.3.1.269</ecNumber>
    </recommendedName>
</protein>